<protein>
    <recommendedName>
        <fullName evidence="1">Chaperone protein DnaK</fullName>
    </recommendedName>
    <alternativeName>
        <fullName evidence="1">HSP70</fullName>
    </alternativeName>
    <alternativeName>
        <fullName evidence="1">Heat shock 70 kDa protein</fullName>
    </alternativeName>
    <alternativeName>
        <fullName evidence="1">Heat shock protein 70</fullName>
    </alternativeName>
</protein>
<comment type="function">
    <text evidence="1">Acts as a chaperone.</text>
</comment>
<comment type="induction">
    <text evidence="1">By stress conditions e.g. heat shock.</text>
</comment>
<comment type="similarity">
    <text evidence="1">Belongs to the heat shock protein 70 family.</text>
</comment>
<sequence>MSKVLGIDLGTTNSCMAIYEGKEAKVIPNKEGKNTTPSVVAFTDKGEVLVGDPAKRQMITNPKRTIYSVKRIMGMMCNEEKAQEAKKRLPYNIVDRNGACAVDVDGKVYTPQEISAKILMKLKEDAEAYLGQEITEAVITVPAYFNDAQRKATKEAGQIAGLNVLRIINEPTAAALAYGLDKKEAEKIVVYDLGGGTFDVTILETGDNVVEVLATGGDAFLGGDDFDNRIIDWLVDEFKKETGIDLKSDIMALQRLKEAAENAKKELSSAMETEINLPFITADQSGPKHLVKKLTRAKFESLIEDLVEKTITIANNVLKDSGLSKDEVNEVVLVGGSTRIPLVQQKVKEFFGKEPNKSVNPDEVVAVGAAIQGAVIKGDVKDVLLLDVTPLSLGIETLGGVMTKIIEKGTTIPVKKSQIFSTAEDNQPAVTIHVLQGEREMAKDNKSLGQFTLEGIPPAPRGVPQIEVTFDIDANGILTVSAKDKATGKEQKITVTGTSGLSEEEIQRMIQDAEAHKEEDRKRKELVETRNQADALAYQTEKSLKEVGNAISADERAQIEAALNDLKNVLKDENATKEQIEAKVQALTQVSHKLAEAMYKKEQGQTGGTEQGGTEQKKSGGDDDVIDAEVE</sequence>
<organism>
    <name type="scientific">Nitratiruptor sp. (strain SB155-2)</name>
    <dbReference type="NCBI Taxonomy" id="387092"/>
    <lineage>
        <taxon>Bacteria</taxon>
        <taxon>Pseudomonadati</taxon>
        <taxon>Campylobacterota</taxon>
        <taxon>Epsilonproteobacteria</taxon>
        <taxon>Nautiliales</taxon>
        <taxon>Nitratiruptoraceae</taxon>
        <taxon>Nitratiruptor</taxon>
    </lineage>
</organism>
<name>DNAK_NITSB</name>
<accession>A6Q421</accession>
<proteinExistence type="inferred from homology"/>
<keyword id="KW-0067">ATP-binding</keyword>
<keyword id="KW-0143">Chaperone</keyword>
<keyword id="KW-0547">Nucleotide-binding</keyword>
<keyword id="KW-0597">Phosphoprotein</keyword>
<keyword id="KW-1185">Reference proteome</keyword>
<keyword id="KW-0346">Stress response</keyword>
<feature type="chain" id="PRO_1000059619" description="Chaperone protein DnaK">
    <location>
        <begin position="1"/>
        <end position="631"/>
    </location>
</feature>
<feature type="region of interest" description="Disordered" evidence="2">
    <location>
        <begin position="598"/>
        <end position="631"/>
    </location>
</feature>
<feature type="compositionally biased region" description="Acidic residues" evidence="2">
    <location>
        <begin position="622"/>
        <end position="631"/>
    </location>
</feature>
<feature type="modified residue" description="Phosphothreonine; by autocatalysis" evidence="1">
    <location>
        <position position="197"/>
    </location>
</feature>
<gene>
    <name evidence="1" type="primary">dnaK</name>
    <name type="ordered locus">NIS_1121</name>
</gene>
<reference key="1">
    <citation type="journal article" date="2007" name="Proc. Natl. Acad. Sci. U.S.A.">
        <title>Deep-sea vent epsilon-proteobacterial genomes provide insights into emergence of pathogens.</title>
        <authorList>
            <person name="Nakagawa S."/>
            <person name="Takaki Y."/>
            <person name="Shimamura S."/>
            <person name="Reysenbach A.-L."/>
            <person name="Takai K."/>
            <person name="Horikoshi K."/>
        </authorList>
    </citation>
    <scope>NUCLEOTIDE SEQUENCE [LARGE SCALE GENOMIC DNA]</scope>
    <source>
        <strain>SB155-2</strain>
    </source>
</reference>
<evidence type="ECO:0000255" key="1">
    <source>
        <dbReference type="HAMAP-Rule" id="MF_00332"/>
    </source>
</evidence>
<evidence type="ECO:0000256" key="2">
    <source>
        <dbReference type="SAM" id="MobiDB-lite"/>
    </source>
</evidence>
<dbReference type="EMBL" id="AP009178">
    <property type="protein sequence ID" value="BAF70230.1"/>
    <property type="molecule type" value="Genomic_DNA"/>
</dbReference>
<dbReference type="RefSeq" id="WP_012082493.1">
    <property type="nucleotide sequence ID" value="NC_009662.1"/>
</dbReference>
<dbReference type="SMR" id="A6Q421"/>
<dbReference type="FunCoup" id="A6Q421">
    <property type="interactions" value="526"/>
</dbReference>
<dbReference type="STRING" id="387092.NIS_1121"/>
<dbReference type="KEGG" id="nis:NIS_1121"/>
<dbReference type="eggNOG" id="COG0443">
    <property type="taxonomic scope" value="Bacteria"/>
</dbReference>
<dbReference type="HOGENOM" id="CLU_005965_2_1_7"/>
<dbReference type="InParanoid" id="A6Q421"/>
<dbReference type="OrthoDB" id="9766019at2"/>
<dbReference type="Proteomes" id="UP000001118">
    <property type="component" value="Chromosome"/>
</dbReference>
<dbReference type="GO" id="GO:0005524">
    <property type="term" value="F:ATP binding"/>
    <property type="evidence" value="ECO:0007669"/>
    <property type="project" value="UniProtKB-UniRule"/>
</dbReference>
<dbReference type="GO" id="GO:0140662">
    <property type="term" value="F:ATP-dependent protein folding chaperone"/>
    <property type="evidence" value="ECO:0007669"/>
    <property type="project" value="InterPro"/>
</dbReference>
<dbReference type="GO" id="GO:0051082">
    <property type="term" value="F:unfolded protein binding"/>
    <property type="evidence" value="ECO:0007669"/>
    <property type="project" value="InterPro"/>
</dbReference>
<dbReference type="CDD" id="cd10234">
    <property type="entry name" value="ASKHA_NBD_HSP70_DnaK-like"/>
    <property type="match status" value="1"/>
</dbReference>
<dbReference type="FunFam" id="2.60.34.10:FF:000014">
    <property type="entry name" value="Chaperone protein DnaK HSP70"/>
    <property type="match status" value="1"/>
</dbReference>
<dbReference type="FunFam" id="1.20.1270.10:FF:000001">
    <property type="entry name" value="Molecular chaperone DnaK"/>
    <property type="match status" value="1"/>
</dbReference>
<dbReference type="FunFam" id="3.30.420.40:FF:000004">
    <property type="entry name" value="Molecular chaperone DnaK"/>
    <property type="match status" value="1"/>
</dbReference>
<dbReference type="FunFam" id="3.90.640.10:FF:000003">
    <property type="entry name" value="Molecular chaperone DnaK"/>
    <property type="match status" value="1"/>
</dbReference>
<dbReference type="Gene3D" id="1.20.1270.10">
    <property type="match status" value="1"/>
</dbReference>
<dbReference type="Gene3D" id="3.30.420.40">
    <property type="match status" value="2"/>
</dbReference>
<dbReference type="Gene3D" id="3.90.640.10">
    <property type="entry name" value="Actin, Chain A, domain 4"/>
    <property type="match status" value="1"/>
</dbReference>
<dbReference type="Gene3D" id="2.60.34.10">
    <property type="entry name" value="Substrate Binding Domain Of DNAk, Chain A, domain 1"/>
    <property type="match status" value="1"/>
</dbReference>
<dbReference type="HAMAP" id="MF_00332">
    <property type="entry name" value="DnaK"/>
    <property type="match status" value="1"/>
</dbReference>
<dbReference type="InterPro" id="IPR043129">
    <property type="entry name" value="ATPase_NBD"/>
</dbReference>
<dbReference type="InterPro" id="IPR012725">
    <property type="entry name" value="Chaperone_DnaK"/>
</dbReference>
<dbReference type="InterPro" id="IPR018181">
    <property type="entry name" value="Heat_shock_70_CS"/>
</dbReference>
<dbReference type="InterPro" id="IPR029048">
    <property type="entry name" value="HSP70_C_sf"/>
</dbReference>
<dbReference type="InterPro" id="IPR029047">
    <property type="entry name" value="HSP70_peptide-bd_sf"/>
</dbReference>
<dbReference type="InterPro" id="IPR013126">
    <property type="entry name" value="Hsp_70_fam"/>
</dbReference>
<dbReference type="NCBIfam" id="NF001413">
    <property type="entry name" value="PRK00290.1"/>
    <property type="match status" value="1"/>
</dbReference>
<dbReference type="NCBIfam" id="NF003520">
    <property type="entry name" value="PRK05183.1"/>
    <property type="match status" value="1"/>
</dbReference>
<dbReference type="NCBIfam" id="TIGR02350">
    <property type="entry name" value="prok_dnaK"/>
    <property type="match status" value="1"/>
</dbReference>
<dbReference type="PANTHER" id="PTHR19375">
    <property type="entry name" value="HEAT SHOCK PROTEIN 70KDA"/>
    <property type="match status" value="1"/>
</dbReference>
<dbReference type="Pfam" id="PF00012">
    <property type="entry name" value="HSP70"/>
    <property type="match status" value="1"/>
</dbReference>
<dbReference type="PRINTS" id="PR00301">
    <property type="entry name" value="HEATSHOCK70"/>
</dbReference>
<dbReference type="SUPFAM" id="SSF53067">
    <property type="entry name" value="Actin-like ATPase domain"/>
    <property type="match status" value="2"/>
</dbReference>
<dbReference type="SUPFAM" id="SSF100934">
    <property type="entry name" value="Heat shock protein 70kD (HSP70), C-terminal subdomain"/>
    <property type="match status" value="1"/>
</dbReference>
<dbReference type="SUPFAM" id="SSF100920">
    <property type="entry name" value="Heat shock protein 70kD (HSP70), peptide-binding domain"/>
    <property type="match status" value="1"/>
</dbReference>
<dbReference type="PROSITE" id="PS00297">
    <property type="entry name" value="HSP70_1"/>
    <property type="match status" value="1"/>
</dbReference>
<dbReference type="PROSITE" id="PS00329">
    <property type="entry name" value="HSP70_2"/>
    <property type="match status" value="1"/>
</dbReference>
<dbReference type="PROSITE" id="PS01036">
    <property type="entry name" value="HSP70_3"/>
    <property type="match status" value="1"/>
</dbReference>